<comment type="function">
    <text evidence="1">Is required not only for elongation of protein synthesis but also for the initiation of all mRNA translation through initiator tRNA(fMet) aminoacylation.</text>
</comment>
<comment type="catalytic activity">
    <reaction evidence="1">
        <text>tRNA(Met) + L-methionine + ATP = L-methionyl-tRNA(Met) + AMP + diphosphate</text>
        <dbReference type="Rhea" id="RHEA:13481"/>
        <dbReference type="Rhea" id="RHEA-COMP:9667"/>
        <dbReference type="Rhea" id="RHEA-COMP:9698"/>
        <dbReference type="ChEBI" id="CHEBI:30616"/>
        <dbReference type="ChEBI" id="CHEBI:33019"/>
        <dbReference type="ChEBI" id="CHEBI:57844"/>
        <dbReference type="ChEBI" id="CHEBI:78442"/>
        <dbReference type="ChEBI" id="CHEBI:78530"/>
        <dbReference type="ChEBI" id="CHEBI:456215"/>
        <dbReference type="EC" id="6.1.1.10"/>
    </reaction>
</comment>
<comment type="cofactor">
    <cofactor evidence="1">
        <name>Zn(2+)</name>
        <dbReference type="ChEBI" id="CHEBI:29105"/>
    </cofactor>
    <text evidence="1">Binds 1 zinc ion per subunit.</text>
</comment>
<comment type="subunit">
    <text evidence="1">Monomer.</text>
</comment>
<comment type="subcellular location">
    <subcellularLocation>
        <location evidence="1">Cytoplasm</location>
    </subcellularLocation>
</comment>
<comment type="similarity">
    <text evidence="1">Belongs to the class-I aminoacyl-tRNA synthetase family. MetG type 1 subfamily.</text>
</comment>
<keyword id="KW-0030">Aminoacyl-tRNA synthetase</keyword>
<keyword id="KW-0067">ATP-binding</keyword>
<keyword id="KW-0963">Cytoplasm</keyword>
<keyword id="KW-0436">Ligase</keyword>
<keyword id="KW-0479">Metal-binding</keyword>
<keyword id="KW-0547">Nucleotide-binding</keyword>
<keyword id="KW-0648">Protein biosynthesis</keyword>
<keyword id="KW-0862">Zinc</keyword>
<name>SYM_RUTMC</name>
<evidence type="ECO:0000255" key="1">
    <source>
        <dbReference type="HAMAP-Rule" id="MF_00098"/>
    </source>
</evidence>
<proteinExistence type="inferred from homology"/>
<dbReference type="EC" id="6.1.1.10" evidence="1"/>
<dbReference type="EMBL" id="CP000488">
    <property type="protein sequence ID" value="ABL02321.1"/>
    <property type="molecule type" value="Genomic_DNA"/>
</dbReference>
<dbReference type="SMR" id="A1AWL4"/>
<dbReference type="STRING" id="413404.Rmag_0570"/>
<dbReference type="KEGG" id="rma:Rmag_0570"/>
<dbReference type="eggNOG" id="COG0143">
    <property type="taxonomic scope" value="Bacteria"/>
</dbReference>
<dbReference type="HOGENOM" id="CLU_009710_7_0_6"/>
<dbReference type="OrthoDB" id="9810191at2"/>
<dbReference type="Proteomes" id="UP000002587">
    <property type="component" value="Chromosome"/>
</dbReference>
<dbReference type="GO" id="GO:0005829">
    <property type="term" value="C:cytosol"/>
    <property type="evidence" value="ECO:0007669"/>
    <property type="project" value="TreeGrafter"/>
</dbReference>
<dbReference type="GO" id="GO:0005524">
    <property type="term" value="F:ATP binding"/>
    <property type="evidence" value="ECO:0007669"/>
    <property type="project" value="UniProtKB-UniRule"/>
</dbReference>
<dbReference type="GO" id="GO:0046872">
    <property type="term" value="F:metal ion binding"/>
    <property type="evidence" value="ECO:0007669"/>
    <property type="project" value="UniProtKB-KW"/>
</dbReference>
<dbReference type="GO" id="GO:0004825">
    <property type="term" value="F:methionine-tRNA ligase activity"/>
    <property type="evidence" value="ECO:0007669"/>
    <property type="project" value="UniProtKB-UniRule"/>
</dbReference>
<dbReference type="GO" id="GO:0006431">
    <property type="term" value="P:methionyl-tRNA aminoacylation"/>
    <property type="evidence" value="ECO:0007669"/>
    <property type="project" value="UniProtKB-UniRule"/>
</dbReference>
<dbReference type="CDD" id="cd07957">
    <property type="entry name" value="Anticodon_Ia_Met"/>
    <property type="match status" value="1"/>
</dbReference>
<dbReference type="CDD" id="cd00814">
    <property type="entry name" value="MetRS_core"/>
    <property type="match status" value="1"/>
</dbReference>
<dbReference type="FunFam" id="1.10.730.10:FF:000005">
    <property type="entry name" value="Methionine--tRNA ligase"/>
    <property type="match status" value="1"/>
</dbReference>
<dbReference type="FunFam" id="2.20.28.20:FF:000001">
    <property type="entry name" value="Methionine--tRNA ligase"/>
    <property type="match status" value="1"/>
</dbReference>
<dbReference type="Gene3D" id="3.40.50.620">
    <property type="entry name" value="HUPs"/>
    <property type="match status" value="1"/>
</dbReference>
<dbReference type="Gene3D" id="1.10.730.10">
    <property type="entry name" value="Isoleucyl-tRNA Synthetase, Domain 1"/>
    <property type="match status" value="1"/>
</dbReference>
<dbReference type="Gene3D" id="2.20.28.20">
    <property type="entry name" value="Methionyl-tRNA synthetase, Zn-domain"/>
    <property type="match status" value="1"/>
</dbReference>
<dbReference type="HAMAP" id="MF_00098">
    <property type="entry name" value="Met_tRNA_synth_type1"/>
    <property type="match status" value="1"/>
</dbReference>
<dbReference type="InterPro" id="IPR001412">
    <property type="entry name" value="aa-tRNA-synth_I_CS"/>
</dbReference>
<dbReference type="InterPro" id="IPR041872">
    <property type="entry name" value="Anticodon_Met"/>
</dbReference>
<dbReference type="InterPro" id="IPR023458">
    <property type="entry name" value="Met-tRNA_ligase_1"/>
</dbReference>
<dbReference type="InterPro" id="IPR014758">
    <property type="entry name" value="Met-tRNA_synth"/>
</dbReference>
<dbReference type="InterPro" id="IPR015413">
    <property type="entry name" value="Methionyl/Leucyl_tRNA_Synth"/>
</dbReference>
<dbReference type="InterPro" id="IPR033911">
    <property type="entry name" value="MetRS_core"/>
</dbReference>
<dbReference type="InterPro" id="IPR029038">
    <property type="entry name" value="MetRS_Zn"/>
</dbReference>
<dbReference type="InterPro" id="IPR014729">
    <property type="entry name" value="Rossmann-like_a/b/a_fold"/>
</dbReference>
<dbReference type="InterPro" id="IPR009080">
    <property type="entry name" value="tRNAsynth_Ia_anticodon-bd"/>
</dbReference>
<dbReference type="NCBIfam" id="TIGR00398">
    <property type="entry name" value="metG"/>
    <property type="match status" value="1"/>
</dbReference>
<dbReference type="NCBIfam" id="NF001100">
    <property type="entry name" value="PRK00133.1"/>
    <property type="match status" value="1"/>
</dbReference>
<dbReference type="PANTHER" id="PTHR45765">
    <property type="entry name" value="METHIONINE--TRNA LIGASE"/>
    <property type="match status" value="1"/>
</dbReference>
<dbReference type="PANTHER" id="PTHR45765:SF1">
    <property type="entry name" value="METHIONINE--TRNA LIGASE, CYTOPLASMIC"/>
    <property type="match status" value="1"/>
</dbReference>
<dbReference type="Pfam" id="PF19303">
    <property type="entry name" value="Anticodon_3"/>
    <property type="match status" value="1"/>
</dbReference>
<dbReference type="Pfam" id="PF09334">
    <property type="entry name" value="tRNA-synt_1g"/>
    <property type="match status" value="1"/>
</dbReference>
<dbReference type="PRINTS" id="PR01041">
    <property type="entry name" value="TRNASYNTHMET"/>
</dbReference>
<dbReference type="SUPFAM" id="SSF47323">
    <property type="entry name" value="Anticodon-binding domain of a subclass of class I aminoacyl-tRNA synthetases"/>
    <property type="match status" value="1"/>
</dbReference>
<dbReference type="SUPFAM" id="SSF57770">
    <property type="entry name" value="Methionyl-tRNA synthetase (MetRS), Zn-domain"/>
    <property type="match status" value="1"/>
</dbReference>
<dbReference type="SUPFAM" id="SSF52374">
    <property type="entry name" value="Nucleotidylyl transferase"/>
    <property type="match status" value="1"/>
</dbReference>
<dbReference type="PROSITE" id="PS00178">
    <property type="entry name" value="AA_TRNA_LIGASE_I"/>
    <property type="match status" value="1"/>
</dbReference>
<sequence length="550" mass="63668">MTSRKILVTSALPYANGEIHLGHLLEYIQADIWVRFQKMMGNECYYVCADDTHGTPIMLKSDELGITPETLIKGVSERHQADFKEFSIGFSKYHSTHSQENKDISANIYHKLNDAGFIKTRIISQAFDPEKQMFLPDRFIKGDCPKCGANDQYGDNCEICGVTYSPTELKNAKSIISDATPIAKDSEHYFFDLPQFETQLKAWIKEGHLQDEVSNKLSEWFEQGLQQWDISRDAPYFGFQIPDVEGKYFYVWLDAPIGYMASFKKLCDEQGLDFDEYFNKDSNTELYHFIGKDIVYFHALFWPAILMGSNYRTPSAIFVHGFLTVNGQKMSKSRGTFIQARTYLNHLNPECLRYYYAYKLSAKIDDIDLNLTDFKQRVNSDLVGKVVNIASRSTGFLVKKFNKTLSDYAIDPELYHEFVACGDIIKKHYEARNYNQAMREIMKLADKANQYIDEHKPWQLVKKDTKQVHDVTSLAINLFRVLMTYLKPVLPVMAKQAEMFLNIDAFNWQDLKRPLTKHQINTFKPLMSRIEDEKIEQVIEASKQNMQVVA</sequence>
<reference key="1">
    <citation type="journal article" date="2007" name="Science">
        <title>The Calyptogena magnifica chemoautotrophic symbiont genome.</title>
        <authorList>
            <person name="Newton I.L.G."/>
            <person name="Woyke T."/>
            <person name="Auchtung T.A."/>
            <person name="Dilly G.F."/>
            <person name="Dutton R.J."/>
            <person name="Fisher M.C."/>
            <person name="Fontanez K.M."/>
            <person name="Lau E."/>
            <person name="Stewart F.J."/>
            <person name="Richardson P.M."/>
            <person name="Barry K.W."/>
            <person name="Saunders E."/>
            <person name="Detter J.C."/>
            <person name="Wu D."/>
            <person name="Eisen J.A."/>
            <person name="Cavanaugh C.M."/>
        </authorList>
    </citation>
    <scope>NUCLEOTIDE SEQUENCE [LARGE SCALE GENOMIC DNA]</scope>
</reference>
<gene>
    <name evidence="1" type="primary">metG</name>
    <name type="ordered locus">Rmag_0570</name>
</gene>
<feature type="chain" id="PRO_0000331893" description="Methionine--tRNA ligase">
    <location>
        <begin position="1"/>
        <end position="550"/>
    </location>
</feature>
<feature type="short sequence motif" description="'HIGH' region">
    <location>
        <begin position="13"/>
        <end position="23"/>
    </location>
</feature>
<feature type="short sequence motif" description="'KMSKS' region">
    <location>
        <begin position="329"/>
        <end position="333"/>
    </location>
</feature>
<feature type="binding site" evidence="1">
    <location>
        <position position="144"/>
    </location>
    <ligand>
        <name>Zn(2+)</name>
        <dbReference type="ChEBI" id="CHEBI:29105"/>
    </ligand>
</feature>
<feature type="binding site" evidence="1">
    <location>
        <position position="147"/>
    </location>
    <ligand>
        <name>Zn(2+)</name>
        <dbReference type="ChEBI" id="CHEBI:29105"/>
    </ligand>
</feature>
<feature type="binding site" evidence="1">
    <location>
        <position position="157"/>
    </location>
    <ligand>
        <name>Zn(2+)</name>
        <dbReference type="ChEBI" id="CHEBI:29105"/>
    </ligand>
</feature>
<feature type="binding site" evidence="1">
    <location>
        <position position="160"/>
    </location>
    <ligand>
        <name>Zn(2+)</name>
        <dbReference type="ChEBI" id="CHEBI:29105"/>
    </ligand>
</feature>
<feature type="binding site" evidence="1">
    <location>
        <position position="332"/>
    </location>
    <ligand>
        <name>ATP</name>
        <dbReference type="ChEBI" id="CHEBI:30616"/>
    </ligand>
</feature>
<accession>A1AWL4</accession>
<protein>
    <recommendedName>
        <fullName evidence="1">Methionine--tRNA ligase</fullName>
        <ecNumber evidence="1">6.1.1.10</ecNumber>
    </recommendedName>
    <alternativeName>
        <fullName evidence="1">Methionyl-tRNA synthetase</fullName>
        <shortName evidence="1">MetRS</shortName>
    </alternativeName>
</protein>
<organism>
    <name type="scientific">Ruthia magnifica subsp. Calyptogena magnifica</name>
    <dbReference type="NCBI Taxonomy" id="413404"/>
    <lineage>
        <taxon>Bacteria</taxon>
        <taxon>Pseudomonadati</taxon>
        <taxon>Pseudomonadota</taxon>
        <taxon>Gammaproteobacteria</taxon>
        <taxon>Candidatus Pseudothioglobaceae</taxon>
        <taxon>Candidatus Ruthturnera</taxon>
    </lineage>
</organism>